<proteinExistence type="inferred from homology"/>
<sequence length="557" mass="61080">MDIKRTVLWVIFFMSAVMLFDNWQRSHGRPSMFFPNVTQTNTASNATNGNGASGASAAAANALPAAATGAAPATTAPAAQAQLVRFSTDVYNGEIDTRGGTLAKLTLTKAGDGKQPDLSVTLFDNAANHTYLARTGLLGGDFPNHNDVYTQAAGPTSLAAGQNTLKLAFESPVKGGVKVVKTYTFTRGSYVIGVDTKIENVGTAPVTPSVYMELVRDNTSVETPMFSHTFLGPAVYTDQKHFQKITFSDIDKNKADYVTSADNGWIAMVQHYFASAWIPQQGAKRDIYVEKIDPTLYRVGVKQPVAAIAPGQSADVSARLFAGPEEERMLEGIAPGLELVKDYGWVTIIAKPLFWLLEKIHGFVGNWGWAIVLLTLLIKAVFFPLSAASYKSMARMKEITPRMQALRERFKSDPQKMNAALMELYKTEKVNPFGGCLPVVIQIPVFISLYWVLLASVEMRGAPWILWIHDLSQRDPYFILPVLMAVSMFVQTKLNPTPPDPVQAKMMMFMPIAFSVMFFFFPAGLVLYYVVNNVLSIAQQYYITRTLGAAAAKKKAS</sequence>
<feature type="chain" id="PRO_1000070076" description="Membrane protein insertase YidC">
    <location>
        <begin position="1"/>
        <end position="557"/>
    </location>
</feature>
<feature type="transmembrane region" description="Helical" evidence="1">
    <location>
        <begin position="3"/>
        <end position="23"/>
    </location>
</feature>
<feature type="transmembrane region" description="Helical" evidence="1">
    <location>
        <begin position="363"/>
        <end position="383"/>
    </location>
</feature>
<feature type="transmembrane region" description="Helical" evidence="1">
    <location>
        <begin position="437"/>
        <end position="457"/>
    </location>
</feature>
<feature type="transmembrane region" description="Helical" evidence="1">
    <location>
        <begin position="476"/>
        <end position="496"/>
    </location>
</feature>
<feature type="transmembrane region" description="Helical" evidence="1">
    <location>
        <begin position="507"/>
        <end position="527"/>
    </location>
</feature>
<evidence type="ECO:0000255" key="1">
    <source>
        <dbReference type="HAMAP-Rule" id="MF_01810"/>
    </source>
</evidence>
<comment type="function">
    <text evidence="1">Required for the insertion and/or proper folding and/or complex formation of integral membrane proteins into the membrane. Involved in integration of membrane proteins that insert both dependently and independently of the Sec translocase complex, as well as at least some lipoproteins. Aids folding of multispanning membrane proteins.</text>
</comment>
<comment type="subunit">
    <text evidence="1">Interacts with the Sec translocase complex via SecD. Specifically interacts with transmembrane segments of nascent integral membrane proteins during membrane integration.</text>
</comment>
<comment type="subcellular location">
    <subcellularLocation>
        <location evidence="1">Cell inner membrane</location>
        <topology evidence="1">Multi-pass membrane protein</topology>
    </subcellularLocation>
</comment>
<comment type="similarity">
    <text evidence="1">Belongs to the OXA1/ALB3/YidC family. Type 1 subfamily.</text>
</comment>
<reference key="1">
    <citation type="journal article" date="2005" name="BMC Genomics">
        <title>Bacterial genome adaptation to niches: divergence of the potential virulence genes in three Burkholderia species of different survival strategies.</title>
        <authorList>
            <person name="Kim H.S."/>
            <person name="Schell M.A."/>
            <person name="Yu Y."/>
            <person name="Ulrich R.L."/>
            <person name="Sarria S.H."/>
            <person name="Nierman W.C."/>
            <person name="DeShazer D."/>
        </authorList>
    </citation>
    <scope>NUCLEOTIDE SEQUENCE [LARGE SCALE GENOMIC DNA]</scope>
    <source>
        <strain>ATCC 700388 / DSM 13276 / CCUG 48851 / CIP 106301 / E264</strain>
    </source>
</reference>
<protein>
    <recommendedName>
        <fullName evidence="1">Membrane protein insertase YidC</fullName>
    </recommendedName>
    <alternativeName>
        <fullName evidence="1">Foldase YidC</fullName>
    </alternativeName>
    <alternativeName>
        <fullName evidence="1">Membrane integrase YidC</fullName>
    </alternativeName>
    <alternativeName>
        <fullName evidence="1">Membrane protein YidC</fullName>
    </alternativeName>
</protein>
<keyword id="KW-0997">Cell inner membrane</keyword>
<keyword id="KW-1003">Cell membrane</keyword>
<keyword id="KW-0143">Chaperone</keyword>
<keyword id="KW-0472">Membrane</keyword>
<keyword id="KW-0653">Protein transport</keyword>
<keyword id="KW-0812">Transmembrane</keyword>
<keyword id="KW-1133">Transmembrane helix</keyword>
<keyword id="KW-0813">Transport</keyword>
<accession>Q2STM0</accession>
<dbReference type="EMBL" id="CP000086">
    <property type="protein sequence ID" value="ABC37554.1"/>
    <property type="molecule type" value="Genomic_DNA"/>
</dbReference>
<dbReference type="RefSeq" id="WP_009910184.1">
    <property type="nucleotide sequence ID" value="NZ_CP008785.1"/>
</dbReference>
<dbReference type="SMR" id="Q2STM0"/>
<dbReference type="GeneID" id="45122913"/>
<dbReference type="KEGG" id="bte:BTH_I3235"/>
<dbReference type="HOGENOM" id="CLU_016535_3_0_4"/>
<dbReference type="Proteomes" id="UP000001930">
    <property type="component" value="Chromosome I"/>
</dbReference>
<dbReference type="GO" id="GO:0005886">
    <property type="term" value="C:plasma membrane"/>
    <property type="evidence" value="ECO:0007669"/>
    <property type="project" value="UniProtKB-SubCell"/>
</dbReference>
<dbReference type="GO" id="GO:0032977">
    <property type="term" value="F:membrane insertase activity"/>
    <property type="evidence" value="ECO:0007669"/>
    <property type="project" value="InterPro"/>
</dbReference>
<dbReference type="GO" id="GO:0051205">
    <property type="term" value="P:protein insertion into membrane"/>
    <property type="evidence" value="ECO:0007669"/>
    <property type="project" value="TreeGrafter"/>
</dbReference>
<dbReference type="GO" id="GO:0015031">
    <property type="term" value="P:protein transport"/>
    <property type="evidence" value="ECO:0007669"/>
    <property type="project" value="UniProtKB-KW"/>
</dbReference>
<dbReference type="CDD" id="cd20070">
    <property type="entry name" value="5TM_YidC_Alb3"/>
    <property type="match status" value="1"/>
</dbReference>
<dbReference type="CDD" id="cd19961">
    <property type="entry name" value="EcYidC-like_peri"/>
    <property type="match status" value="1"/>
</dbReference>
<dbReference type="Gene3D" id="2.70.98.90">
    <property type="match status" value="1"/>
</dbReference>
<dbReference type="HAMAP" id="MF_01810">
    <property type="entry name" value="YidC_type1"/>
    <property type="match status" value="1"/>
</dbReference>
<dbReference type="InterPro" id="IPR019998">
    <property type="entry name" value="Membr_insert_YidC"/>
</dbReference>
<dbReference type="InterPro" id="IPR028053">
    <property type="entry name" value="Membr_insert_YidC_N"/>
</dbReference>
<dbReference type="InterPro" id="IPR001708">
    <property type="entry name" value="YidC/ALB3/OXA1/COX18"/>
</dbReference>
<dbReference type="InterPro" id="IPR028055">
    <property type="entry name" value="YidC/Oxa/ALB_C"/>
</dbReference>
<dbReference type="InterPro" id="IPR047196">
    <property type="entry name" value="YidC_ALB_C"/>
</dbReference>
<dbReference type="InterPro" id="IPR038221">
    <property type="entry name" value="YidC_periplasmic_sf"/>
</dbReference>
<dbReference type="NCBIfam" id="NF002352">
    <property type="entry name" value="PRK01318.1-3"/>
    <property type="match status" value="1"/>
</dbReference>
<dbReference type="NCBIfam" id="NF002353">
    <property type="entry name" value="PRK01318.1-4"/>
    <property type="match status" value="1"/>
</dbReference>
<dbReference type="NCBIfam" id="TIGR03593">
    <property type="entry name" value="yidC_nterm"/>
    <property type="match status" value="1"/>
</dbReference>
<dbReference type="NCBIfam" id="TIGR03592">
    <property type="entry name" value="yidC_oxa1_cterm"/>
    <property type="match status" value="1"/>
</dbReference>
<dbReference type="PANTHER" id="PTHR12428:SF65">
    <property type="entry name" value="CYTOCHROME C OXIDASE ASSEMBLY PROTEIN COX18, MITOCHONDRIAL"/>
    <property type="match status" value="1"/>
</dbReference>
<dbReference type="PANTHER" id="PTHR12428">
    <property type="entry name" value="OXA1"/>
    <property type="match status" value="1"/>
</dbReference>
<dbReference type="Pfam" id="PF02096">
    <property type="entry name" value="60KD_IMP"/>
    <property type="match status" value="1"/>
</dbReference>
<dbReference type="Pfam" id="PF14849">
    <property type="entry name" value="YidC_periplas"/>
    <property type="match status" value="1"/>
</dbReference>
<dbReference type="PRINTS" id="PR00701">
    <property type="entry name" value="60KDINNERMP"/>
</dbReference>
<dbReference type="PRINTS" id="PR01900">
    <property type="entry name" value="YIDCPROTEIN"/>
</dbReference>
<organism>
    <name type="scientific">Burkholderia thailandensis (strain ATCC 700388 / DSM 13276 / CCUG 48851 / CIP 106301 / E264)</name>
    <dbReference type="NCBI Taxonomy" id="271848"/>
    <lineage>
        <taxon>Bacteria</taxon>
        <taxon>Pseudomonadati</taxon>
        <taxon>Pseudomonadota</taxon>
        <taxon>Betaproteobacteria</taxon>
        <taxon>Burkholderiales</taxon>
        <taxon>Burkholderiaceae</taxon>
        <taxon>Burkholderia</taxon>
        <taxon>pseudomallei group</taxon>
    </lineage>
</organism>
<name>YIDC_BURTA</name>
<gene>
    <name evidence="1" type="primary">yidC</name>
    <name type="ordered locus">BTH_I3235</name>
</gene>